<proteinExistence type="evidence at protein level"/>
<feature type="chain" id="PRO_0000447271" description="Metal-staphylopine import system permease protein CntB">
    <location>
        <begin position="1"/>
        <end position="311"/>
    </location>
</feature>
<feature type="transmembrane region" description="Helical" evidence="1">
    <location>
        <begin position="9"/>
        <end position="29"/>
    </location>
</feature>
<feature type="transmembrane region" description="Helical" evidence="1">
    <location>
        <begin position="105"/>
        <end position="125"/>
    </location>
</feature>
<feature type="transmembrane region" description="Helical" evidence="1">
    <location>
        <begin position="139"/>
        <end position="159"/>
    </location>
</feature>
<feature type="transmembrane region" description="Helical" evidence="1">
    <location>
        <begin position="173"/>
        <end position="193"/>
    </location>
</feature>
<feature type="transmembrane region" description="Helical" evidence="1">
    <location>
        <begin position="237"/>
        <end position="257"/>
    </location>
</feature>
<feature type="transmembrane region" description="Helical" evidence="1">
    <location>
        <begin position="274"/>
        <end position="294"/>
    </location>
</feature>
<feature type="domain" description="ABC transmembrane type-1" evidence="2">
    <location>
        <begin position="99"/>
        <end position="295"/>
    </location>
</feature>
<comment type="function">
    <text evidence="3 4">Part of the ABC transporter complex CntABCDF (Opp1) involved in the uptake of metal in complex with the metallophore staphylopine (StP). Involved in the import of divalent metals ions such as nickel, cobalt and zinc. Probably responsible for the translocation of the substrate across the membrane (PubMed:23279021, PubMed:29581261). Plays a major role in nickel/cobalt import in zinc-depleted conditions. Contributes to virulence. Required for full urease activity in vitro (PubMed:23279021).</text>
</comment>
<comment type="activity regulation">
    <text evidence="3">Nickel/cobalt import is reduced in the presence of zinc.</text>
</comment>
<comment type="subunit">
    <text evidence="7 8">The complex is composed of two ATP-binding proteins (CntD and CntF), two transmembrane proteins (CntB and CntC) and a solute-binding protein (CntA).</text>
</comment>
<comment type="subcellular location">
    <subcellularLocation>
        <location evidence="6">Cell membrane</location>
        <topology evidence="1">Multi-pass membrane protein</topology>
    </subcellularLocation>
</comment>
<comment type="induction">
    <text evidence="3">Repressed by zinc.</text>
</comment>
<comment type="disruption phenotype">
    <text evidence="3">Deletion of the cntABCDF genes decreases nickel and cobalt intracellular levels and decreases virulence.</text>
</comment>
<comment type="similarity">
    <text evidence="6">Belongs to the binding-protein-dependent transport system permease family.</text>
</comment>
<reference key="1">
    <citation type="book" date="2006" name="Gram positive pathogens, 2nd edition">
        <title>The Staphylococcus aureus NCTC 8325 genome.</title>
        <editorList>
            <person name="Fischetti V."/>
            <person name="Novick R."/>
            <person name="Ferretti J."/>
            <person name="Portnoy D."/>
            <person name="Rood J."/>
        </editorList>
        <authorList>
            <person name="Gillaspy A.F."/>
            <person name="Worrell V."/>
            <person name="Orvis J."/>
            <person name="Roe B.A."/>
            <person name="Dyer D.W."/>
            <person name="Iandolo J.J."/>
        </authorList>
    </citation>
    <scope>NUCLEOTIDE SEQUENCE [LARGE SCALE GENOMIC DNA]</scope>
    <source>
        <strain>NCTC 8325 / PS 47</strain>
    </source>
</reference>
<reference key="2">
    <citation type="journal article" date="2013" name="Mol. Microbiol.">
        <title>The Staphylococcus aureus Opp1 ABC transporter imports nickel and cobalt in zinc-depleted conditions and contributes to virulence.</title>
        <authorList>
            <person name="Remy L."/>
            <person name="Carriere M."/>
            <person name="Derre-Bobillot A."/>
            <person name="Martini C."/>
            <person name="Sanguinetti M."/>
            <person name="Borezee-Durant E."/>
        </authorList>
    </citation>
    <scope>FUNCTION</scope>
    <scope>ACTIVITY REGULATION</scope>
    <scope>SUBUNIT</scope>
    <scope>INDUCTION</scope>
    <scope>DISRUPTION PHENOTYPE</scope>
    <source>
        <strain>RN6390</strain>
    </source>
</reference>
<reference key="3">
    <citation type="journal article" date="2018" name="Proc. Natl. Acad. Sci. U.S.A.">
        <title>Mechanistic insights into staphylopine-mediated metal acquisition.</title>
        <authorList>
            <person name="Song L."/>
            <person name="Zhang Y."/>
            <person name="Chen W."/>
            <person name="Gu T."/>
            <person name="Zhang S.Y."/>
            <person name="Ji Q."/>
        </authorList>
    </citation>
    <scope>FUNCTION</scope>
    <scope>SUBUNIT</scope>
</reference>
<name>CNTB_STAA8</name>
<accession>Q2FVE8</accession>
<gene>
    <name evidence="5" type="primary">cntB</name>
    <name evidence="5" type="synonym">opp1B</name>
    <name evidence="9" type="ordered locus">SAOUHSC_02766</name>
</gene>
<dbReference type="EMBL" id="CP000253">
    <property type="protein sequence ID" value="ABD31770.1"/>
    <property type="molecule type" value="Genomic_DNA"/>
</dbReference>
<dbReference type="RefSeq" id="WP_000472235.1">
    <property type="nucleotide sequence ID" value="NZ_LS483365.1"/>
</dbReference>
<dbReference type="RefSeq" id="YP_501225.1">
    <property type="nucleotide sequence ID" value="NC_007795.1"/>
</dbReference>
<dbReference type="SMR" id="Q2FVE8"/>
<dbReference type="STRING" id="93061.SAOUHSC_02766"/>
<dbReference type="TCDB" id="3.A.1.5.43">
    <property type="family name" value="the atp-binding cassette (abc) superfamily"/>
</dbReference>
<dbReference type="PaxDb" id="1280-SAXN108_2720"/>
<dbReference type="GeneID" id="3921421"/>
<dbReference type="KEGG" id="sao:SAOUHSC_02766"/>
<dbReference type="PATRIC" id="fig|93061.5.peg.2501"/>
<dbReference type="eggNOG" id="COG0601">
    <property type="taxonomic scope" value="Bacteria"/>
</dbReference>
<dbReference type="HOGENOM" id="CLU_036879_0_2_9"/>
<dbReference type="OrthoDB" id="9773683at2"/>
<dbReference type="Proteomes" id="UP000008816">
    <property type="component" value="Chromosome"/>
</dbReference>
<dbReference type="GO" id="GO:0005886">
    <property type="term" value="C:plasma membrane"/>
    <property type="evidence" value="ECO:0000318"/>
    <property type="project" value="GO_Central"/>
</dbReference>
<dbReference type="GO" id="GO:0022857">
    <property type="term" value="F:transmembrane transporter activity"/>
    <property type="evidence" value="ECO:0000318"/>
    <property type="project" value="GO_Central"/>
</dbReference>
<dbReference type="GO" id="GO:0006824">
    <property type="term" value="P:cobalt ion transport"/>
    <property type="evidence" value="ECO:0007669"/>
    <property type="project" value="UniProtKB-KW"/>
</dbReference>
<dbReference type="GO" id="GO:0015675">
    <property type="term" value="P:nickel cation transport"/>
    <property type="evidence" value="ECO:0007669"/>
    <property type="project" value="UniProtKB-KW"/>
</dbReference>
<dbReference type="GO" id="GO:0006829">
    <property type="term" value="P:zinc ion transport"/>
    <property type="evidence" value="ECO:0007669"/>
    <property type="project" value="UniProtKB-KW"/>
</dbReference>
<dbReference type="CDD" id="cd06261">
    <property type="entry name" value="TM_PBP2"/>
    <property type="match status" value="1"/>
</dbReference>
<dbReference type="Gene3D" id="1.10.3720.10">
    <property type="entry name" value="MetI-like"/>
    <property type="match status" value="1"/>
</dbReference>
<dbReference type="InterPro" id="IPR045621">
    <property type="entry name" value="BPD_transp_1_N"/>
</dbReference>
<dbReference type="InterPro" id="IPR050036">
    <property type="entry name" value="CntB"/>
</dbReference>
<dbReference type="InterPro" id="IPR000515">
    <property type="entry name" value="MetI-like"/>
</dbReference>
<dbReference type="InterPro" id="IPR035906">
    <property type="entry name" value="MetI-like_sf"/>
</dbReference>
<dbReference type="NCBIfam" id="NF045469">
    <property type="entry name" value="Opp1B"/>
    <property type="match status" value="1"/>
</dbReference>
<dbReference type="PANTHER" id="PTHR43163">
    <property type="entry name" value="DIPEPTIDE TRANSPORT SYSTEM PERMEASE PROTEIN DPPB-RELATED"/>
    <property type="match status" value="1"/>
</dbReference>
<dbReference type="PANTHER" id="PTHR43163:SF6">
    <property type="entry name" value="DIPEPTIDE TRANSPORT SYSTEM PERMEASE PROTEIN DPPB-RELATED"/>
    <property type="match status" value="1"/>
</dbReference>
<dbReference type="Pfam" id="PF00528">
    <property type="entry name" value="BPD_transp_1"/>
    <property type="match status" value="1"/>
</dbReference>
<dbReference type="Pfam" id="PF19300">
    <property type="entry name" value="BPD_transp_1_N"/>
    <property type="match status" value="1"/>
</dbReference>
<dbReference type="SUPFAM" id="SSF161098">
    <property type="entry name" value="MetI-like"/>
    <property type="match status" value="1"/>
</dbReference>
<dbReference type="PROSITE" id="PS50928">
    <property type="entry name" value="ABC_TM1"/>
    <property type="match status" value="1"/>
</dbReference>
<organism>
    <name type="scientific">Staphylococcus aureus (strain NCTC 8325 / PS 47)</name>
    <dbReference type="NCBI Taxonomy" id="93061"/>
    <lineage>
        <taxon>Bacteria</taxon>
        <taxon>Bacillati</taxon>
        <taxon>Bacillota</taxon>
        <taxon>Bacilli</taxon>
        <taxon>Bacillales</taxon>
        <taxon>Staphylococcaceae</taxon>
        <taxon>Staphylococcus</taxon>
    </lineage>
</organism>
<sequence>MFKFILKRIALMFPLMIVVSFMTFLLTYITNENPAVTILHAQGTPNVTPELIAETNEKYGFNDPLLIQYKNWLLEAMQFNFGTSYITGDPVAERIGPAFMNTLKLTIISSVMVMITSIILGVVSALKRGKFTDRAIRSVAFFLTALPSYWIASILIIYVSVKLNILPTSGLTGPESYILPVIVITIAYAGIYFRNVRRSMVEQLNEDYVLYLRASGVKSITLMLHVLRNALQVAVSIFCMSIPMIMGGLVVIEYIFAWPGLGQLSLKAILEHDFPVIQAYVLIVAVLFIVFNTLADIINALLNPRLREGAR</sequence>
<protein>
    <recommendedName>
        <fullName evidence="6">Metal-staphylopine import system permease protein CntB</fullName>
    </recommendedName>
</protein>
<keyword id="KW-1003">Cell membrane</keyword>
<keyword id="KW-0170">Cobalt</keyword>
<keyword id="KW-0171">Cobalt transport</keyword>
<keyword id="KW-0406">Ion transport</keyword>
<keyword id="KW-0472">Membrane</keyword>
<keyword id="KW-0533">Nickel</keyword>
<keyword id="KW-0921">Nickel transport</keyword>
<keyword id="KW-1185">Reference proteome</keyword>
<keyword id="KW-0812">Transmembrane</keyword>
<keyword id="KW-1133">Transmembrane helix</keyword>
<keyword id="KW-0813">Transport</keyword>
<keyword id="KW-0862">Zinc</keyword>
<keyword id="KW-0864">Zinc transport</keyword>
<evidence type="ECO:0000255" key="1"/>
<evidence type="ECO:0000255" key="2">
    <source>
        <dbReference type="PROSITE-ProRule" id="PRU00441"/>
    </source>
</evidence>
<evidence type="ECO:0000269" key="3">
    <source>
    </source>
</evidence>
<evidence type="ECO:0000269" key="4">
    <source>
    </source>
</evidence>
<evidence type="ECO:0000303" key="5">
    <source>
    </source>
</evidence>
<evidence type="ECO:0000305" key="6"/>
<evidence type="ECO:0000305" key="7">
    <source>
    </source>
</evidence>
<evidence type="ECO:0000305" key="8">
    <source>
    </source>
</evidence>
<evidence type="ECO:0000312" key="9">
    <source>
        <dbReference type="EMBL" id="ABD31770.1"/>
    </source>
</evidence>